<accession>Q5E8B7</accession>
<protein>
    <recommendedName>
        <fullName evidence="1">Small ribosomal subunit protein uS10</fullName>
    </recommendedName>
    <alternativeName>
        <fullName evidence="2">30S ribosomal protein S10</fullName>
    </alternativeName>
</protein>
<comment type="function">
    <text evidence="1">Involved in the binding of tRNA to the ribosomes.</text>
</comment>
<comment type="subunit">
    <text evidence="1">Part of the 30S ribosomal subunit.</text>
</comment>
<comment type="similarity">
    <text evidence="1">Belongs to the universal ribosomal protein uS10 family.</text>
</comment>
<gene>
    <name evidence="1" type="primary">rpsJ</name>
    <name type="ordered locus">VF_0234</name>
</gene>
<sequence length="103" mass="11753">MQNQRIRIRLKAFDYKLIDQSTAEIVETAKRTGAQVRGPIPLPTRKERFTVLTSPHVNKDARDQYEIRTHKRLIDIVEPTDKTVDALMRLDLAAGVDVQISLG</sequence>
<keyword id="KW-1185">Reference proteome</keyword>
<keyword id="KW-0687">Ribonucleoprotein</keyword>
<keyword id="KW-0689">Ribosomal protein</keyword>
<feature type="chain" id="PRO_0000237116" description="Small ribosomal subunit protein uS10">
    <location>
        <begin position="1"/>
        <end position="103"/>
    </location>
</feature>
<reference key="1">
    <citation type="journal article" date="2005" name="Proc. Natl. Acad. Sci. U.S.A.">
        <title>Complete genome sequence of Vibrio fischeri: a symbiotic bacterium with pathogenic congeners.</title>
        <authorList>
            <person name="Ruby E.G."/>
            <person name="Urbanowski M."/>
            <person name="Campbell J."/>
            <person name="Dunn A."/>
            <person name="Faini M."/>
            <person name="Gunsalus R."/>
            <person name="Lostroh P."/>
            <person name="Lupp C."/>
            <person name="McCann J."/>
            <person name="Millikan D."/>
            <person name="Schaefer A."/>
            <person name="Stabb E."/>
            <person name="Stevens A."/>
            <person name="Visick K."/>
            <person name="Whistler C."/>
            <person name="Greenberg E.P."/>
        </authorList>
    </citation>
    <scope>NUCLEOTIDE SEQUENCE [LARGE SCALE GENOMIC DNA]</scope>
    <source>
        <strain>ATCC 700601 / ES114</strain>
    </source>
</reference>
<organism>
    <name type="scientific">Aliivibrio fischeri (strain ATCC 700601 / ES114)</name>
    <name type="common">Vibrio fischeri</name>
    <dbReference type="NCBI Taxonomy" id="312309"/>
    <lineage>
        <taxon>Bacteria</taxon>
        <taxon>Pseudomonadati</taxon>
        <taxon>Pseudomonadota</taxon>
        <taxon>Gammaproteobacteria</taxon>
        <taxon>Vibrionales</taxon>
        <taxon>Vibrionaceae</taxon>
        <taxon>Aliivibrio</taxon>
    </lineage>
</organism>
<proteinExistence type="inferred from homology"/>
<evidence type="ECO:0000255" key="1">
    <source>
        <dbReference type="HAMAP-Rule" id="MF_00508"/>
    </source>
</evidence>
<evidence type="ECO:0000305" key="2"/>
<dbReference type="EMBL" id="CP000020">
    <property type="protein sequence ID" value="AAW84729.1"/>
    <property type="molecule type" value="Genomic_DNA"/>
</dbReference>
<dbReference type="RefSeq" id="WP_005417222.1">
    <property type="nucleotide sequence ID" value="NZ_CAWLES010000001.1"/>
</dbReference>
<dbReference type="RefSeq" id="YP_203617.1">
    <property type="nucleotide sequence ID" value="NC_006840.2"/>
</dbReference>
<dbReference type="SMR" id="Q5E8B7"/>
<dbReference type="STRING" id="312309.VF_0234"/>
<dbReference type="EnsemblBacteria" id="AAW84729">
    <property type="protein sequence ID" value="AAW84729"/>
    <property type="gene ID" value="VF_0234"/>
</dbReference>
<dbReference type="GeneID" id="56276456"/>
<dbReference type="KEGG" id="vfi:VF_0234"/>
<dbReference type="PATRIC" id="fig|312309.11.peg.231"/>
<dbReference type="eggNOG" id="COG0051">
    <property type="taxonomic scope" value="Bacteria"/>
</dbReference>
<dbReference type="HOGENOM" id="CLU_122625_1_3_6"/>
<dbReference type="OrthoDB" id="9804464at2"/>
<dbReference type="PRO" id="PR:Q5E8B7"/>
<dbReference type="Proteomes" id="UP000000537">
    <property type="component" value="Chromosome I"/>
</dbReference>
<dbReference type="GO" id="GO:1990904">
    <property type="term" value="C:ribonucleoprotein complex"/>
    <property type="evidence" value="ECO:0007669"/>
    <property type="project" value="UniProtKB-KW"/>
</dbReference>
<dbReference type="GO" id="GO:0005840">
    <property type="term" value="C:ribosome"/>
    <property type="evidence" value="ECO:0007669"/>
    <property type="project" value="UniProtKB-KW"/>
</dbReference>
<dbReference type="GO" id="GO:0003735">
    <property type="term" value="F:structural constituent of ribosome"/>
    <property type="evidence" value="ECO:0007669"/>
    <property type="project" value="InterPro"/>
</dbReference>
<dbReference type="GO" id="GO:0000049">
    <property type="term" value="F:tRNA binding"/>
    <property type="evidence" value="ECO:0007669"/>
    <property type="project" value="UniProtKB-UniRule"/>
</dbReference>
<dbReference type="GO" id="GO:0006412">
    <property type="term" value="P:translation"/>
    <property type="evidence" value="ECO:0007669"/>
    <property type="project" value="UniProtKB-UniRule"/>
</dbReference>
<dbReference type="FunFam" id="3.30.70.600:FF:000001">
    <property type="entry name" value="30S ribosomal protein S10"/>
    <property type="match status" value="1"/>
</dbReference>
<dbReference type="Gene3D" id="3.30.70.600">
    <property type="entry name" value="Ribosomal protein S10 domain"/>
    <property type="match status" value="1"/>
</dbReference>
<dbReference type="HAMAP" id="MF_00508">
    <property type="entry name" value="Ribosomal_uS10"/>
    <property type="match status" value="1"/>
</dbReference>
<dbReference type="InterPro" id="IPR001848">
    <property type="entry name" value="Ribosomal_uS10"/>
</dbReference>
<dbReference type="InterPro" id="IPR018268">
    <property type="entry name" value="Ribosomal_uS10_CS"/>
</dbReference>
<dbReference type="InterPro" id="IPR027486">
    <property type="entry name" value="Ribosomal_uS10_dom"/>
</dbReference>
<dbReference type="InterPro" id="IPR036838">
    <property type="entry name" value="Ribosomal_uS10_dom_sf"/>
</dbReference>
<dbReference type="NCBIfam" id="NF001861">
    <property type="entry name" value="PRK00596.1"/>
    <property type="match status" value="1"/>
</dbReference>
<dbReference type="NCBIfam" id="TIGR01049">
    <property type="entry name" value="rpsJ_bact"/>
    <property type="match status" value="1"/>
</dbReference>
<dbReference type="PANTHER" id="PTHR11700">
    <property type="entry name" value="30S RIBOSOMAL PROTEIN S10 FAMILY MEMBER"/>
    <property type="match status" value="1"/>
</dbReference>
<dbReference type="Pfam" id="PF00338">
    <property type="entry name" value="Ribosomal_S10"/>
    <property type="match status" value="1"/>
</dbReference>
<dbReference type="PRINTS" id="PR00971">
    <property type="entry name" value="RIBOSOMALS10"/>
</dbReference>
<dbReference type="SMART" id="SM01403">
    <property type="entry name" value="Ribosomal_S10"/>
    <property type="match status" value="1"/>
</dbReference>
<dbReference type="SUPFAM" id="SSF54999">
    <property type="entry name" value="Ribosomal protein S10"/>
    <property type="match status" value="1"/>
</dbReference>
<dbReference type="PROSITE" id="PS00361">
    <property type="entry name" value="RIBOSOMAL_S10"/>
    <property type="match status" value="1"/>
</dbReference>
<name>RS10_ALIF1</name>